<accession>Q6P7C7</accession>
<reference key="1">
    <citation type="journal article" date="2004" name="Genome Res.">
        <title>The status, quality, and expansion of the NIH full-length cDNA project: the Mammalian Gene Collection (MGC).</title>
        <authorList>
            <consortium name="The MGC Project Team"/>
        </authorList>
    </citation>
    <scope>NUCLEOTIDE SEQUENCE [LARGE SCALE MRNA]</scope>
    <source>
        <tissue>Prostate</tissue>
    </source>
</reference>
<gene>
    <name type="primary">Gpnmb</name>
</gene>
<comment type="function">
    <text evidence="1">Could be a melanogenic enzyme.</text>
</comment>
<comment type="subcellular location">
    <subcellularLocation>
        <location>Cell membrane</location>
        <topology evidence="2">Single-pass type I membrane protein</topology>
    </subcellularLocation>
    <subcellularLocation>
        <location>Melanosome membrane</location>
        <topology evidence="2">Single-pass type I membrane protein</topology>
    </subcellularLocation>
    <subcellularLocation>
        <location>Early endosome membrane</location>
        <topology evidence="2">Single-pass type I membrane protein</topology>
    </subcellularLocation>
    <text evidence="2">Identified by mass spectrometry in melanosome fractions from stage I to stage IV.</text>
</comment>
<comment type="similarity">
    <text evidence="7">Belongs to the PMEL/NMB family.</text>
</comment>
<protein>
    <recommendedName>
        <fullName>Transmembrane glycoprotein NMB</fullName>
    </recommendedName>
</protein>
<dbReference type="EMBL" id="BC061725">
    <property type="protein sequence ID" value="AAH61725.1"/>
    <property type="molecule type" value="mRNA"/>
</dbReference>
<dbReference type="FunCoup" id="Q6P7C7">
    <property type="interactions" value="61"/>
</dbReference>
<dbReference type="STRING" id="10116.ENSRNOP00000011945"/>
<dbReference type="GlyCosmos" id="Q6P7C7">
    <property type="glycosylation" value="11 sites, No reported glycans"/>
</dbReference>
<dbReference type="GlyGen" id="Q6P7C7">
    <property type="glycosylation" value="14 sites"/>
</dbReference>
<dbReference type="PhosphoSitePlus" id="Q6P7C7"/>
<dbReference type="PaxDb" id="10116-ENSRNOP00000011945"/>
<dbReference type="Ensembl" id="ENSRNOT00000104789.1">
    <property type="protein sequence ID" value="ENSRNOP00000076498.1"/>
    <property type="gene ID" value="ENSRNOG00000008816.5"/>
</dbReference>
<dbReference type="UCSC" id="RGD:71008">
    <property type="organism name" value="rat"/>
</dbReference>
<dbReference type="AGR" id="RGD:71008"/>
<dbReference type="RGD" id="71008">
    <property type="gene designation" value="Gpnmb"/>
</dbReference>
<dbReference type="eggNOG" id="ENOG502QVWX">
    <property type="taxonomic scope" value="Eukaryota"/>
</dbReference>
<dbReference type="GeneTree" id="ENSGT00950000183188"/>
<dbReference type="HOGENOM" id="CLU_017264_1_0_1"/>
<dbReference type="InParanoid" id="Q6P7C7"/>
<dbReference type="OMA" id="HGWRKWN"/>
<dbReference type="OrthoDB" id="9940970at2759"/>
<dbReference type="PhylomeDB" id="Q6P7C7"/>
<dbReference type="TreeFam" id="TF334865"/>
<dbReference type="Reactome" id="R-RNO-8857538">
    <property type="pathway name" value="PTK6 promotes HIF1A stabilization"/>
</dbReference>
<dbReference type="PRO" id="PR:Q6P7C7"/>
<dbReference type="Proteomes" id="UP000002494">
    <property type="component" value="Chromosome 4"/>
</dbReference>
<dbReference type="Bgee" id="ENSRNOG00000008816">
    <property type="expression patterns" value="Expressed in lung and 20 other cell types or tissues"/>
</dbReference>
<dbReference type="GO" id="GO:0031410">
    <property type="term" value="C:cytoplasmic vesicle"/>
    <property type="evidence" value="ECO:0000266"/>
    <property type="project" value="RGD"/>
</dbReference>
<dbReference type="GO" id="GO:0031901">
    <property type="term" value="C:early endosome membrane"/>
    <property type="evidence" value="ECO:0007669"/>
    <property type="project" value="UniProtKB-SubCell"/>
</dbReference>
<dbReference type="GO" id="GO:0033162">
    <property type="term" value="C:melanosome membrane"/>
    <property type="evidence" value="ECO:0007669"/>
    <property type="project" value="UniProtKB-SubCell"/>
</dbReference>
<dbReference type="GO" id="GO:0016020">
    <property type="term" value="C:membrane"/>
    <property type="evidence" value="ECO:0000266"/>
    <property type="project" value="RGD"/>
</dbReference>
<dbReference type="GO" id="GO:0005886">
    <property type="term" value="C:plasma membrane"/>
    <property type="evidence" value="ECO:0000266"/>
    <property type="project" value="RGD"/>
</dbReference>
<dbReference type="GO" id="GO:0008201">
    <property type="term" value="F:heparin binding"/>
    <property type="evidence" value="ECO:0000266"/>
    <property type="project" value="RGD"/>
</dbReference>
<dbReference type="GO" id="GO:0005178">
    <property type="term" value="F:integrin binding"/>
    <property type="evidence" value="ECO:0000266"/>
    <property type="project" value="RGD"/>
</dbReference>
<dbReference type="GO" id="GO:0048018">
    <property type="term" value="F:receptor ligand activity"/>
    <property type="evidence" value="ECO:0000266"/>
    <property type="project" value="RGD"/>
</dbReference>
<dbReference type="GO" id="GO:0045545">
    <property type="term" value="F:syndecan binding"/>
    <property type="evidence" value="ECO:0000266"/>
    <property type="project" value="RGD"/>
</dbReference>
<dbReference type="GO" id="GO:0030282">
    <property type="term" value="P:bone mineralization"/>
    <property type="evidence" value="ECO:0000270"/>
    <property type="project" value="RGD"/>
</dbReference>
<dbReference type="GO" id="GO:0007155">
    <property type="term" value="P:cell adhesion"/>
    <property type="evidence" value="ECO:0000266"/>
    <property type="project" value="RGD"/>
</dbReference>
<dbReference type="GO" id="GO:0007267">
    <property type="term" value="P:cell-cell signaling"/>
    <property type="evidence" value="ECO:0000266"/>
    <property type="project" value="RGD"/>
</dbReference>
<dbReference type="GO" id="GO:0001818">
    <property type="term" value="P:negative regulation of cytokine production"/>
    <property type="evidence" value="ECO:0000266"/>
    <property type="project" value="RGD"/>
</dbReference>
<dbReference type="GO" id="GO:2000134">
    <property type="term" value="P:negative regulation of G1/S transition of mitotic cell cycle"/>
    <property type="evidence" value="ECO:0000266"/>
    <property type="project" value="RGD"/>
</dbReference>
<dbReference type="GO" id="GO:0050868">
    <property type="term" value="P:negative regulation of T cell activation"/>
    <property type="evidence" value="ECO:0000266"/>
    <property type="project" value="RGD"/>
</dbReference>
<dbReference type="GO" id="GO:0042130">
    <property type="term" value="P:negative regulation of T cell proliferation"/>
    <property type="evidence" value="ECO:0000266"/>
    <property type="project" value="RGD"/>
</dbReference>
<dbReference type="GO" id="GO:0032720">
    <property type="term" value="P:negative regulation of tumor necrosis factor production"/>
    <property type="evidence" value="ECO:0000266"/>
    <property type="project" value="RGD"/>
</dbReference>
<dbReference type="GO" id="GO:0001649">
    <property type="term" value="P:osteoblast differentiation"/>
    <property type="evidence" value="ECO:0000270"/>
    <property type="project" value="RGD"/>
</dbReference>
<dbReference type="GO" id="GO:0030335">
    <property type="term" value="P:positive regulation of cell migration"/>
    <property type="evidence" value="ECO:0000266"/>
    <property type="project" value="RGD"/>
</dbReference>
<dbReference type="GO" id="GO:0070374">
    <property type="term" value="P:positive regulation of ERK1 and ERK2 cascade"/>
    <property type="evidence" value="ECO:0000266"/>
    <property type="project" value="RGD"/>
</dbReference>
<dbReference type="GO" id="GO:0034103">
    <property type="term" value="P:regulation of tissue remodeling"/>
    <property type="evidence" value="ECO:0000266"/>
    <property type="project" value="RGD"/>
</dbReference>
<dbReference type="GO" id="GO:0007165">
    <property type="term" value="P:signal transduction"/>
    <property type="evidence" value="ECO:0000266"/>
    <property type="project" value="RGD"/>
</dbReference>
<dbReference type="CDD" id="cd00146">
    <property type="entry name" value="PKD"/>
    <property type="match status" value="1"/>
</dbReference>
<dbReference type="FunFam" id="2.60.40.10:FF:000893">
    <property type="entry name" value="Transmembrane glycoprotein NMB"/>
    <property type="match status" value="1"/>
</dbReference>
<dbReference type="Gene3D" id="2.60.40.10">
    <property type="entry name" value="Immunoglobulins"/>
    <property type="match status" value="1"/>
</dbReference>
<dbReference type="InterPro" id="IPR013783">
    <property type="entry name" value="Ig-like_fold"/>
</dbReference>
<dbReference type="InterPro" id="IPR045219">
    <property type="entry name" value="PKAT"/>
</dbReference>
<dbReference type="InterPro" id="IPR046846">
    <property type="entry name" value="PKAT_KLD"/>
</dbReference>
<dbReference type="InterPro" id="IPR022409">
    <property type="entry name" value="PKD/Chitinase_dom"/>
</dbReference>
<dbReference type="InterPro" id="IPR000601">
    <property type="entry name" value="PKD_dom"/>
</dbReference>
<dbReference type="InterPro" id="IPR035986">
    <property type="entry name" value="PKD_dom_sf"/>
</dbReference>
<dbReference type="PANTHER" id="PTHR11861">
    <property type="entry name" value="MELANOCYTE PROTEIN PMEL 17-RELATED"/>
    <property type="match status" value="1"/>
</dbReference>
<dbReference type="PANTHER" id="PTHR11861:SF11">
    <property type="entry name" value="TRANSMEMBRANE GLYCOPROTEIN NMB"/>
    <property type="match status" value="1"/>
</dbReference>
<dbReference type="Pfam" id="PF20433">
    <property type="entry name" value="PKAT_KLD"/>
    <property type="match status" value="1"/>
</dbReference>
<dbReference type="Pfam" id="PF18911">
    <property type="entry name" value="PKD_4"/>
    <property type="match status" value="1"/>
</dbReference>
<dbReference type="SMART" id="SM00089">
    <property type="entry name" value="PKD"/>
    <property type="match status" value="1"/>
</dbReference>
<dbReference type="SUPFAM" id="SSF49299">
    <property type="entry name" value="PKD domain"/>
    <property type="match status" value="1"/>
</dbReference>
<dbReference type="PROSITE" id="PS50093">
    <property type="entry name" value="PKD"/>
    <property type="match status" value="1"/>
</dbReference>
<feature type="signal peptide" evidence="4">
    <location>
        <begin position="1"/>
        <end position="22"/>
    </location>
</feature>
<feature type="chain" id="PRO_0000024711" description="Transmembrane glycoprotein NMB">
    <location>
        <begin position="23"/>
        <end position="572"/>
    </location>
</feature>
<feature type="topological domain" description="Extracellular" evidence="4">
    <location>
        <begin position="23"/>
        <end position="500"/>
    </location>
</feature>
<feature type="transmembrane region" description="Helical" evidence="4">
    <location>
        <begin position="501"/>
        <end position="521"/>
    </location>
</feature>
<feature type="topological domain" description="Cytoplasmic" evidence="4">
    <location>
        <begin position="522"/>
        <end position="572"/>
    </location>
</feature>
<feature type="domain" description="PKD" evidence="5">
    <location>
        <begin position="251"/>
        <end position="338"/>
    </location>
</feature>
<feature type="region of interest" description="Disordered" evidence="6">
    <location>
        <begin position="321"/>
        <end position="359"/>
    </location>
</feature>
<feature type="short sequence motif" description="Cell attachment site" evidence="4">
    <location>
        <begin position="556"/>
        <end position="558"/>
    </location>
</feature>
<feature type="compositionally biased region" description="Low complexity" evidence="6">
    <location>
        <begin position="330"/>
        <end position="356"/>
    </location>
</feature>
<feature type="modified residue" description="Phosphoserine" evidence="3">
    <location>
        <position position="544"/>
    </location>
</feature>
<feature type="glycosylation site" description="N-linked (GlcNAc...) asparagine" evidence="4">
    <location>
        <position position="93"/>
    </location>
</feature>
<feature type="glycosylation site" description="N-linked (GlcNAc...) asparagine" evidence="4">
    <location>
        <position position="134"/>
    </location>
</feature>
<feature type="glycosylation site" description="N-linked (GlcNAc...) asparagine" evidence="4">
    <location>
        <position position="200"/>
    </location>
</feature>
<feature type="glycosylation site" description="N-linked (GlcNAc...) asparagine" evidence="4">
    <location>
        <position position="249"/>
    </location>
</feature>
<feature type="glycosylation site" description="N-linked (GlcNAc...) asparagine" evidence="4">
    <location>
        <position position="275"/>
    </location>
</feature>
<feature type="glycosylation site" description="N-linked (GlcNAc...) asparagine" evidence="4">
    <location>
        <position position="296"/>
    </location>
</feature>
<feature type="glycosylation site" description="N-linked (GlcNAc...) asparagine" evidence="4">
    <location>
        <position position="300"/>
    </location>
</feature>
<feature type="glycosylation site" description="N-linked (GlcNAc...) asparagine" evidence="4">
    <location>
        <position position="306"/>
    </location>
</feature>
<feature type="glycosylation site" description="N-linked (GlcNAc...) asparagine" evidence="4">
    <location>
        <position position="312"/>
    </location>
</feature>
<feature type="glycosylation site" description="N-linked (GlcNAc...) asparagine" evidence="4">
    <location>
        <position position="461"/>
    </location>
</feature>
<feature type="glycosylation site" description="N-linked (GlcNAc...) asparagine" evidence="4">
    <location>
        <position position="469"/>
    </location>
</feature>
<sequence>MESLCGVLVFLLLAAGLPLQAAKRFRDVLGHEQYPDHMRENNQLRGWSSDENEWDEQLYPVWRRGEGRWKDSWEGGRVQAALTSDSPALVGSNITFVVNLVFPRCQKEDANGNIVYERNCRSDLELASDPYVYNWTTGADDEDWEDSTSQGQHLRFPDGKPFPRPHGRKKWNFVYVFHTLGQYFQKLGRCSARVSINTVNLTVGPQVMEVIVFRRHGRAYIPISKVKDVYVITDQIPIFVTMYQKNDRNSSDETFLRDLPIFFDVLIHDPSHFLNYSAISYKWNFGDNTGLFVSNNHTLNHTYVLNGTFNFNLTVQTAVPGPCPSPTPSPSSSTSPSPASSPSPTLSTPSPSLMPTGHKSMELSDISNENCRINRYGYFRATITIVDGILEVNIIQVADVPIPTPQPDNSLMDFIVTCKGATPTEACTIISDPTCQIAQNRVCSPVAVDELCLLSVRRAFNGSGTYCVNFTLGDDASLALTSALISIPGKDLGSPLRTVNGVLISIGCLAMFVTMVTILLYKKHKTYKPIGNCTRNVVKGKGLSVFLSHAKAPFSRGDREKDPLLQDKPWML</sequence>
<evidence type="ECO:0000250" key="1"/>
<evidence type="ECO:0000250" key="2">
    <source>
        <dbReference type="UniProtKB" id="Q14956"/>
    </source>
</evidence>
<evidence type="ECO:0000250" key="3">
    <source>
        <dbReference type="UniProtKB" id="Q99P91"/>
    </source>
</evidence>
<evidence type="ECO:0000255" key="4"/>
<evidence type="ECO:0000255" key="5">
    <source>
        <dbReference type="PROSITE-ProRule" id="PRU00151"/>
    </source>
</evidence>
<evidence type="ECO:0000256" key="6">
    <source>
        <dbReference type="SAM" id="MobiDB-lite"/>
    </source>
</evidence>
<evidence type="ECO:0000305" key="7"/>
<organism>
    <name type="scientific">Rattus norvegicus</name>
    <name type="common">Rat</name>
    <dbReference type="NCBI Taxonomy" id="10116"/>
    <lineage>
        <taxon>Eukaryota</taxon>
        <taxon>Metazoa</taxon>
        <taxon>Chordata</taxon>
        <taxon>Craniata</taxon>
        <taxon>Vertebrata</taxon>
        <taxon>Euteleostomi</taxon>
        <taxon>Mammalia</taxon>
        <taxon>Eutheria</taxon>
        <taxon>Euarchontoglires</taxon>
        <taxon>Glires</taxon>
        <taxon>Rodentia</taxon>
        <taxon>Myomorpha</taxon>
        <taxon>Muroidea</taxon>
        <taxon>Muridae</taxon>
        <taxon>Murinae</taxon>
        <taxon>Rattus</taxon>
    </lineage>
</organism>
<proteinExistence type="evidence at transcript level"/>
<keyword id="KW-1003">Cell membrane</keyword>
<keyword id="KW-0967">Endosome</keyword>
<keyword id="KW-0325">Glycoprotein</keyword>
<keyword id="KW-0472">Membrane</keyword>
<keyword id="KW-0597">Phosphoprotein</keyword>
<keyword id="KW-1185">Reference proteome</keyword>
<keyword id="KW-0732">Signal</keyword>
<keyword id="KW-0812">Transmembrane</keyword>
<keyword id="KW-1133">Transmembrane helix</keyword>
<name>GPNMB_RAT</name>